<name>QUEF_SHESR</name>
<sequence length="286" mass="32676">MTHNHDPYSDAKELAGLTLGKATDYQAEYDASLLQGVPRSLNRNAINLTAESLPFHGADIWTAYELSWLNAKGKPMVAIADIQLSHESQNLIESKSFKLYLNSFNQTKFDNIDAVQKTLVQDLGECAQGQVTVKIIEPKSFGIQRVVELPGTCIDDLDIEVSDYDFNPDYLENSTDDKQIVAETLNSNLLKSNCLITSQPDWGSVMIRYQGPKIDREKLLRYLISFRQHNEFHEQCVERIFVDLKHYCHCTKLTVYARYTRRGGLDINPYRSDFEHPGESHRLARQ</sequence>
<organism>
    <name type="scientific">Shewanella sp. (strain MR-7)</name>
    <dbReference type="NCBI Taxonomy" id="60481"/>
    <lineage>
        <taxon>Bacteria</taxon>
        <taxon>Pseudomonadati</taxon>
        <taxon>Pseudomonadota</taxon>
        <taxon>Gammaproteobacteria</taxon>
        <taxon>Alteromonadales</taxon>
        <taxon>Shewanellaceae</taxon>
        <taxon>Shewanella</taxon>
    </lineage>
</organism>
<evidence type="ECO:0000255" key="1">
    <source>
        <dbReference type="HAMAP-Rule" id="MF_00817"/>
    </source>
</evidence>
<gene>
    <name evidence="1" type="primary">queF</name>
    <name type="ordered locus">Shewmr7_2728</name>
</gene>
<keyword id="KW-0963">Cytoplasm</keyword>
<keyword id="KW-0521">NADP</keyword>
<keyword id="KW-0560">Oxidoreductase</keyword>
<keyword id="KW-0671">Queuosine biosynthesis</keyword>
<comment type="function">
    <text evidence="1">Catalyzes the NADPH-dependent reduction of 7-cyano-7-deazaguanine (preQ0) to 7-aminomethyl-7-deazaguanine (preQ1).</text>
</comment>
<comment type="catalytic activity">
    <reaction evidence="1">
        <text>7-aminomethyl-7-carbaguanine + 2 NADP(+) = 7-cyano-7-deazaguanine + 2 NADPH + 3 H(+)</text>
        <dbReference type="Rhea" id="RHEA:13409"/>
        <dbReference type="ChEBI" id="CHEBI:15378"/>
        <dbReference type="ChEBI" id="CHEBI:45075"/>
        <dbReference type="ChEBI" id="CHEBI:57783"/>
        <dbReference type="ChEBI" id="CHEBI:58349"/>
        <dbReference type="ChEBI" id="CHEBI:58703"/>
        <dbReference type="EC" id="1.7.1.13"/>
    </reaction>
</comment>
<comment type="pathway">
    <text evidence="1">tRNA modification; tRNA-queuosine biosynthesis.</text>
</comment>
<comment type="subunit">
    <text evidence="1">Homodimer.</text>
</comment>
<comment type="subcellular location">
    <subcellularLocation>
        <location evidence="1">Cytoplasm</location>
    </subcellularLocation>
</comment>
<comment type="similarity">
    <text evidence="1">Belongs to the GTP cyclohydrolase I family. QueF type 2 subfamily.</text>
</comment>
<protein>
    <recommendedName>
        <fullName evidence="1">NADPH-dependent 7-cyano-7-deazaguanine reductase</fullName>
        <ecNumber evidence="1">1.7.1.13</ecNumber>
    </recommendedName>
    <alternativeName>
        <fullName evidence="1">7-cyano-7-carbaguanine reductase</fullName>
    </alternativeName>
    <alternativeName>
        <fullName evidence="1">NADPH-dependent nitrile oxidoreductase</fullName>
    </alternativeName>
    <alternativeName>
        <fullName evidence="1">PreQ(0) reductase</fullName>
    </alternativeName>
</protein>
<dbReference type="EC" id="1.7.1.13" evidence="1"/>
<dbReference type="EMBL" id="CP000444">
    <property type="protein sequence ID" value="ABI43713.1"/>
    <property type="molecule type" value="Genomic_DNA"/>
</dbReference>
<dbReference type="SMR" id="Q0HT42"/>
<dbReference type="KEGG" id="shm:Shewmr7_2728"/>
<dbReference type="HOGENOM" id="CLU_054738_0_0_6"/>
<dbReference type="UniPathway" id="UPA00392"/>
<dbReference type="GO" id="GO:0005737">
    <property type="term" value="C:cytoplasm"/>
    <property type="evidence" value="ECO:0007669"/>
    <property type="project" value="UniProtKB-SubCell"/>
</dbReference>
<dbReference type="GO" id="GO:0033739">
    <property type="term" value="F:preQ1 synthase activity"/>
    <property type="evidence" value="ECO:0007669"/>
    <property type="project" value="UniProtKB-UniRule"/>
</dbReference>
<dbReference type="GO" id="GO:0008616">
    <property type="term" value="P:queuosine biosynthetic process"/>
    <property type="evidence" value="ECO:0007669"/>
    <property type="project" value="UniProtKB-UniRule"/>
</dbReference>
<dbReference type="GO" id="GO:0006400">
    <property type="term" value="P:tRNA modification"/>
    <property type="evidence" value="ECO:0007669"/>
    <property type="project" value="UniProtKB-UniRule"/>
</dbReference>
<dbReference type="Gene3D" id="3.30.1130.10">
    <property type="match status" value="2"/>
</dbReference>
<dbReference type="HAMAP" id="MF_00817">
    <property type="entry name" value="QueF_type2"/>
    <property type="match status" value="1"/>
</dbReference>
<dbReference type="InterPro" id="IPR043133">
    <property type="entry name" value="GTP-CH-I_C/QueF"/>
</dbReference>
<dbReference type="InterPro" id="IPR050084">
    <property type="entry name" value="NADPH_dep_7-cyano-7-deazaG_red"/>
</dbReference>
<dbReference type="InterPro" id="IPR029500">
    <property type="entry name" value="QueF"/>
</dbReference>
<dbReference type="InterPro" id="IPR029139">
    <property type="entry name" value="QueF_N"/>
</dbReference>
<dbReference type="InterPro" id="IPR016428">
    <property type="entry name" value="QueF_type2"/>
</dbReference>
<dbReference type="NCBIfam" id="TIGR03138">
    <property type="entry name" value="QueF"/>
    <property type="match status" value="1"/>
</dbReference>
<dbReference type="PANTHER" id="PTHR34354">
    <property type="entry name" value="NADPH-DEPENDENT 7-CYANO-7-DEAZAGUANINE REDUCTASE"/>
    <property type="match status" value="1"/>
</dbReference>
<dbReference type="PANTHER" id="PTHR34354:SF1">
    <property type="entry name" value="NADPH-DEPENDENT 7-CYANO-7-DEAZAGUANINE REDUCTASE"/>
    <property type="match status" value="1"/>
</dbReference>
<dbReference type="Pfam" id="PF14489">
    <property type="entry name" value="QueF"/>
    <property type="match status" value="1"/>
</dbReference>
<dbReference type="Pfam" id="PF14819">
    <property type="entry name" value="QueF_N"/>
    <property type="match status" value="1"/>
</dbReference>
<dbReference type="PIRSF" id="PIRSF004750">
    <property type="entry name" value="Nitrile_oxidored_YqcD_prd"/>
    <property type="match status" value="1"/>
</dbReference>
<dbReference type="SUPFAM" id="SSF55620">
    <property type="entry name" value="Tetrahydrobiopterin biosynthesis enzymes-like"/>
    <property type="match status" value="1"/>
</dbReference>
<reference key="1">
    <citation type="submission" date="2006-08" db="EMBL/GenBank/DDBJ databases">
        <title>Complete sequence of chromosome 1 of Shewanella sp. MR-7.</title>
        <authorList>
            <person name="Copeland A."/>
            <person name="Lucas S."/>
            <person name="Lapidus A."/>
            <person name="Barry K."/>
            <person name="Detter J.C."/>
            <person name="Glavina del Rio T."/>
            <person name="Hammon N."/>
            <person name="Israni S."/>
            <person name="Dalin E."/>
            <person name="Tice H."/>
            <person name="Pitluck S."/>
            <person name="Kiss H."/>
            <person name="Brettin T."/>
            <person name="Bruce D."/>
            <person name="Han C."/>
            <person name="Tapia R."/>
            <person name="Gilna P."/>
            <person name="Schmutz J."/>
            <person name="Larimer F."/>
            <person name="Land M."/>
            <person name="Hauser L."/>
            <person name="Kyrpides N."/>
            <person name="Mikhailova N."/>
            <person name="Nealson K."/>
            <person name="Konstantinidis K."/>
            <person name="Klappenbach J."/>
            <person name="Tiedje J."/>
            <person name="Richardson P."/>
        </authorList>
    </citation>
    <scope>NUCLEOTIDE SEQUENCE [LARGE SCALE GENOMIC DNA]</scope>
    <source>
        <strain>MR-7</strain>
    </source>
</reference>
<accession>Q0HT42</accession>
<proteinExistence type="inferred from homology"/>
<feature type="chain" id="PRO_1000062364" description="NADPH-dependent 7-cyano-7-deazaguanine reductase">
    <location>
        <begin position="1"/>
        <end position="286"/>
    </location>
</feature>
<feature type="active site" description="Thioimide intermediate" evidence="1">
    <location>
        <position position="194"/>
    </location>
</feature>
<feature type="active site" description="Proton donor" evidence="1">
    <location>
        <position position="201"/>
    </location>
</feature>
<feature type="binding site" evidence="1">
    <location>
        <begin position="92"/>
        <end position="94"/>
    </location>
    <ligand>
        <name>substrate</name>
    </ligand>
</feature>
<feature type="binding site" evidence="1">
    <location>
        <begin position="94"/>
        <end position="95"/>
    </location>
    <ligand>
        <name>NADPH</name>
        <dbReference type="ChEBI" id="CHEBI:57783"/>
    </ligand>
</feature>
<feature type="binding site" evidence="1">
    <location>
        <begin position="233"/>
        <end position="234"/>
    </location>
    <ligand>
        <name>substrate</name>
    </ligand>
</feature>
<feature type="binding site" evidence="1">
    <location>
        <begin position="262"/>
        <end position="263"/>
    </location>
    <ligand>
        <name>NADPH</name>
        <dbReference type="ChEBI" id="CHEBI:57783"/>
    </ligand>
</feature>